<dbReference type="EMBL" id="AP009152">
    <property type="protein sequence ID" value="BAG29714.1"/>
    <property type="molecule type" value="Genomic_DNA"/>
</dbReference>
<dbReference type="RefSeq" id="WP_012398435.1">
    <property type="nucleotide sequence ID" value="NC_010617.1"/>
</dbReference>
<dbReference type="SMR" id="B2GIM1"/>
<dbReference type="STRING" id="378753.KRH_13670"/>
<dbReference type="KEGG" id="krh:KRH_13670"/>
<dbReference type="eggNOG" id="COG0217">
    <property type="taxonomic scope" value="Bacteria"/>
</dbReference>
<dbReference type="HOGENOM" id="CLU_062974_2_2_11"/>
<dbReference type="OrthoDB" id="9781053at2"/>
<dbReference type="Proteomes" id="UP000008838">
    <property type="component" value="Chromosome"/>
</dbReference>
<dbReference type="GO" id="GO:0005829">
    <property type="term" value="C:cytosol"/>
    <property type="evidence" value="ECO:0007669"/>
    <property type="project" value="TreeGrafter"/>
</dbReference>
<dbReference type="GO" id="GO:0003677">
    <property type="term" value="F:DNA binding"/>
    <property type="evidence" value="ECO:0007669"/>
    <property type="project" value="UniProtKB-UniRule"/>
</dbReference>
<dbReference type="GO" id="GO:0006355">
    <property type="term" value="P:regulation of DNA-templated transcription"/>
    <property type="evidence" value="ECO:0007669"/>
    <property type="project" value="UniProtKB-UniRule"/>
</dbReference>
<dbReference type="FunFam" id="1.10.10.200:FF:000002">
    <property type="entry name" value="Probable transcriptional regulatory protein CLM62_37755"/>
    <property type="match status" value="1"/>
</dbReference>
<dbReference type="Gene3D" id="1.10.10.200">
    <property type="match status" value="1"/>
</dbReference>
<dbReference type="Gene3D" id="3.30.70.980">
    <property type="match status" value="2"/>
</dbReference>
<dbReference type="HAMAP" id="MF_00693">
    <property type="entry name" value="Transcrip_reg_TACO1"/>
    <property type="match status" value="1"/>
</dbReference>
<dbReference type="InterPro" id="IPR017856">
    <property type="entry name" value="Integrase-like_N"/>
</dbReference>
<dbReference type="InterPro" id="IPR048300">
    <property type="entry name" value="TACO1_YebC-like_2nd/3rd_dom"/>
</dbReference>
<dbReference type="InterPro" id="IPR049083">
    <property type="entry name" value="TACO1_YebC_N"/>
</dbReference>
<dbReference type="InterPro" id="IPR002876">
    <property type="entry name" value="Transcrip_reg_TACO1-like"/>
</dbReference>
<dbReference type="InterPro" id="IPR026564">
    <property type="entry name" value="Transcrip_reg_TACO1-like_dom3"/>
</dbReference>
<dbReference type="InterPro" id="IPR029072">
    <property type="entry name" value="YebC-like"/>
</dbReference>
<dbReference type="NCBIfam" id="NF001030">
    <property type="entry name" value="PRK00110.1"/>
    <property type="match status" value="1"/>
</dbReference>
<dbReference type="NCBIfam" id="NF009044">
    <property type="entry name" value="PRK12378.1"/>
    <property type="match status" value="1"/>
</dbReference>
<dbReference type="NCBIfam" id="TIGR01033">
    <property type="entry name" value="YebC/PmpR family DNA-binding transcriptional regulator"/>
    <property type="match status" value="1"/>
</dbReference>
<dbReference type="PANTHER" id="PTHR12532:SF6">
    <property type="entry name" value="TRANSCRIPTIONAL REGULATORY PROTEIN YEBC-RELATED"/>
    <property type="match status" value="1"/>
</dbReference>
<dbReference type="PANTHER" id="PTHR12532">
    <property type="entry name" value="TRANSLATIONAL ACTIVATOR OF CYTOCHROME C OXIDASE 1"/>
    <property type="match status" value="1"/>
</dbReference>
<dbReference type="Pfam" id="PF20772">
    <property type="entry name" value="TACO1_YebC_N"/>
    <property type="match status" value="1"/>
</dbReference>
<dbReference type="Pfam" id="PF01709">
    <property type="entry name" value="Transcrip_reg"/>
    <property type="match status" value="1"/>
</dbReference>
<dbReference type="SUPFAM" id="SSF75625">
    <property type="entry name" value="YebC-like"/>
    <property type="match status" value="1"/>
</dbReference>
<proteinExistence type="inferred from homology"/>
<organism>
    <name type="scientific">Kocuria rhizophila (strain ATCC 9341 / DSM 348 / NBRC 103217 / DC2201)</name>
    <dbReference type="NCBI Taxonomy" id="378753"/>
    <lineage>
        <taxon>Bacteria</taxon>
        <taxon>Bacillati</taxon>
        <taxon>Actinomycetota</taxon>
        <taxon>Actinomycetes</taxon>
        <taxon>Micrococcales</taxon>
        <taxon>Micrococcaceae</taxon>
        <taxon>Kocuria</taxon>
    </lineage>
</organism>
<evidence type="ECO:0000255" key="1">
    <source>
        <dbReference type="HAMAP-Rule" id="MF_00693"/>
    </source>
</evidence>
<gene>
    <name type="ordered locus">KRH_13670</name>
</gene>
<name>Y1367_KOCRD</name>
<keyword id="KW-0963">Cytoplasm</keyword>
<keyword id="KW-0238">DNA-binding</keyword>
<keyword id="KW-1185">Reference proteome</keyword>
<keyword id="KW-0804">Transcription</keyword>
<keyword id="KW-0805">Transcription regulation</keyword>
<sequence length="253" mass="27128">MSGHSKWATTKHKKAAIDAKRAKAFAKYIKGIEVAARMGGADTSGNPALELAVSKAKKNSVPNDNIDRAIKRGAGLTGETIDYTEILYEARGPQGTALYIECLTDNKNRAASEVRVAVTRHGGTMADSGSVAYLFERKGVVEVAKTDGLTEDDVLMAVLDAGADEVLDESDVFEVVSEATDLPAIRAALDEAGLEYNNDDPQFRATMTVDLDAEGARKFLKLADAVEELDDVQNVYSNANIPADVMAQLEDDE</sequence>
<feature type="chain" id="PRO_1000200097" description="Probable transcriptional regulatory protein KRH_13670">
    <location>
        <begin position="1"/>
        <end position="253"/>
    </location>
</feature>
<comment type="subcellular location">
    <subcellularLocation>
        <location evidence="1">Cytoplasm</location>
    </subcellularLocation>
</comment>
<comment type="similarity">
    <text evidence="1">Belongs to the TACO1 family.</text>
</comment>
<reference key="1">
    <citation type="journal article" date="2008" name="J. Bacteriol.">
        <title>Complete genome sequence of the soil actinomycete Kocuria rhizophila.</title>
        <authorList>
            <person name="Takarada H."/>
            <person name="Sekine M."/>
            <person name="Kosugi H."/>
            <person name="Matsuo Y."/>
            <person name="Fujisawa T."/>
            <person name="Omata S."/>
            <person name="Kishi E."/>
            <person name="Shimizu A."/>
            <person name="Tsukatani N."/>
            <person name="Tanikawa S."/>
            <person name="Fujita N."/>
            <person name="Harayama S."/>
        </authorList>
    </citation>
    <scope>NUCLEOTIDE SEQUENCE [LARGE SCALE GENOMIC DNA]</scope>
    <source>
        <strain>ATCC 9341 / DSM 348 / NBRC 103217 / DC2201</strain>
    </source>
</reference>
<accession>B2GIM1</accession>
<protein>
    <recommendedName>
        <fullName evidence="1">Probable transcriptional regulatory protein KRH_13670</fullName>
    </recommendedName>
</protein>